<feature type="chain" id="PRO_1000136157" description="D-cysteine desulfhydrase">
    <location>
        <begin position="1"/>
        <end position="328"/>
    </location>
</feature>
<feature type="modified residue" description="N6-(pyridoxal phosphate)lysine" evidence="1">
    <location>
        <position position="51"/>
    </location>
</feature>
<comment type="function">
    <text evidence="1">Catalyzes the alpha,beta-elimination reaction of D-cysteine and of several D-cysteine derivatives. It could be a defense mechanism against D-cysteine.</text>
</comment>
<comment type="catalytic activity">
    <reaction evidence="1">
        <text>D-cysteine + H2O = hydrogen sulfide + pyruvate + NH4(+) + H(+)</text>
        <dbReference type="Rhea" id="RHEA:11268"/>
        <dbReference type="ChEBI" id="CHEBI:15361"/>
        <dbReference type="ChEBI" id="CHEBI:15377"/>
        <dbReference type="ChEBI" id="CHEBI:15378"/>
        <dbReference type="ChEBI" id="CHEBI:28938"/>
        <dbReference type="ChEBI" id="CHEBI:29919"/>
        <dbReference type="ChEBI" id="CHEBI:35236"/>
        <dbReference type="EC" id="4.4.1.15"/>
    </reaction>
</comment>
<comment type="cofactor">
    <cofactor evidence="1">
        <name>pyridoxal 5'-phosphate</name>
        <dbReference type="ChEBI" id="CHEBI:597326"/>
    </cofactor>
</comment>
<comment type="subunit">
    <text evidence="1">Homodimer.</text>
</comment>
<comment type="similarity">
    <text evidence="1">Belongs to the ACC deaminase/D-cysteine desulfhydrase family.</text>
</comment>
<evidence type="ECO:0000255" key="1">
    <source>
        <dbReference type="HAMAP-Rule" id="MF_01045"/>
    </source>
</evidence>
<accession>B5YRU5</accession>
<name>DCYD_ECO5E</name>
<reference key="1">
    <citation type="journal article" date="2011" name="Proc. Natl. Acad. Sci. U.S.A.">
        <title>Genomic anatomy of Escherichia coli O157:H7 outbreaks.</title>
        <authorList>
            <person name="Eppinger M."/>
            <person name="Mammel M.K."/>
            <person name="Leclerc J.E."/>
            <person name="Ravel J."/>
            <person name="Cebula T.A."/>
        </authorList>
    </citation>
    <scope>NUCLEOTIDE SEQUENCE [LARGE SCALE GENOMIC DNA]</scope>
    <source>
        <strain>EC4115 / EHEC</strain>
    </source>
</reference>
<sequence>MPLHNLTRFPRLEFIGAPTPLEYLPRFSDYLGREIFIKRDDVTPMAMGGNKLRKLEFLAADALREGADTLITAGAIQSNHVRQTAAVAAKLGLHCVALLENPIGTTAENYLTNGNRLLLDLFNTQIEMCDALTDPNAQLEELATRVEAQGFRPYVIPVGGSNALGALGYVESALEIAQQCEGAVNISSVVVASGSAGTHAGLAVGLEHLMPESELIGVTVSRSVADQLPKVVNLQQAIAKELELTASVEILLWDDYFAPGYGVPNDEGMEAVKLLARLEGILLDPVYTGKAMAGLIDGISQKRFKDEGPILFIHTGGAPALFAYHPHV</sequence>
<dbReference type="EC" id="4.4.1.15" evidence="1"/>
<dbReference type="EMBL" id="CP001164">
    <property type="protein sequence ID" value="ACI39001.1"/>
    <property type="molecule type" value="Genomic_DNA"/>
</dbReference>
<dbReference type="RefSeq" id="WP_001128225.1">
    <property type="nucleotide sequence ID" value="NC_011353.1"/>
</dbReference>
<dbReference type="SMR" id="B5YRU5"/>
<dbReference type="KEGG" id="ecf:ECH74115_2693"/>
<dbReference type="HOGENOM" id="CLU_048897_1_0_6"/>
<dbReference type="GO" id="GO:0019148">
    <property type="term" value="F:D-cysteine desulfhydrase activity"/>
    <property type="evidence" value="ECO:0007669"/>
    <property type="project" value="UniProtKB-UniRule"/>
</dbReference>
<dbReference type="GO" id="GO:0046416">
    <property type="term" value="P:D-amino acid metabolic process"/>
    <property type="evidence" value="ECO:0007669"/>
    <property type="project" value="UniProtKB-UniRule"/>
</dbReference>
<dbReference type="CDD" id="cd06449">
    <property type="entry name" value="ACCD"/>
    <property type="match status" value="1"/>
</dbReference>
<dbReference type="FunFam" id="3.40.50.1100:FF:000019">
    <property type="entry name" value="D-cysteine desulfhydrase"/>
    <property type="match status" value="1"/>
</dbReference>
<dbReference type="Gene3D" id="3.40.50.1100">
    <property type="match status" value="2"/>
</dbReference>
<dbReference type="HAMAP" id="MF_01045">
    <property type="entry name" value="D_Cys_desulfhydr"/>
    <property type="match status" value="1"/>
</dbReference>
<dbReference type="InterPro" id="IPR027278">
    <property type="entry name" value="ACCD_DCysDesulf"/>
</dbReference>
<dbReference type="InterPro" id="IPR005966">
    <property type="entry name" value="D-Cys_desShydrase"/>
</dbReference>
<dbReference type="InterPro" id="IPR023702">
    <property type="entry name" value="D_Cys_desulphydr_bac"/>
</dbReference>
<dbReference type="InterPro" id="IPR001926">
    <property type="entry name" value="TrpB-like_PALP"/>
</dbReference>
<dbReference type="InterPro" id="IPR036052">
    <property type="entry name" value="TrpB-like_PALP_sf"/>
</dbReference>
<dbReference type="NCBIfam" id="TIGR01275">
    <property type="entry name" value="ACC_deam_rel"/>
    <property type="match status" value="1"/>
</dbReference>
<dbReference type="NCBIfam" id="NF003029">
    <property type="entry name" value="PRK03910.1-1"/>
    <property type="match status" value="1"/>
</dbReference>
<dbReference type="NCBIfam" id="NF003030">
    <property type="entry name" value="PRK03910.1-3"/>
    <property type="match status" value="1"/>
</dbReference>
<dbReference type="NCBIfam" id="NF003032">
    <property type="entry name" value="PRK03910.1-5"/>
    <property type="match status" value="1"/>
</dbReference>
<dbReference type="PANTHER" id="PTHR43780">
    <property type="entry name" value="1-AMINOCYCLOPROPANE-1-CARBOXYLATE DEAMINASE-RELATED"/>
    <property type="match status" value="1"/>
</dbReference>
<dbReference type="PANTHER" id="PTHR43780:SF2">
    <property type="entry name" value="1-AMINOCYCLOPROPANE-1-CARBOXYLATE DEAMINASE-RELATED"/>
    <property type="match status" value="1"/>
</dbReference>
<dbReference type="Pfam" id="PF00291">
    <property type="entry name" value="PALP"/>
    <property type="match status" value="1"/>
</dbReference>
<dbReference type="PIRSF" id="PIRSF006278">
    <property type="entry name" value="ACCD_DCysDesulf"/>
    <property type="match status" value="1"/>
</dbReference>
<dbReference type="SUPFAM" id="SSF53686">
    <property type="entry name" value="Tryptophan synthase beta subunit-like PLP-dependent enzymes"/>
    <property type="match status" value="1"/>
</dbReference>
<protein>
    <recommendedName>
        <fullName evidence="1">D-cysteine desulfhydrase</fullName>
        <ecNumber evidence="1">4.4.1.15</ecNumber>
    </recommendedName>
</protein>
<keyword id="KW-0456">Lyase</keyword>
<keyword id="KW-0663">Pyridoxal phosphate</keyword>
<proteinExistence type="inferred from homology"/>
<organism>
    <name type="scientific">Escherichia coli O157:H7 (strain EC4115 / EHEC)</name>
    <dbReference type="NCBI Taxonomy" id="444450"/>
    <lineage>
        <taxon>Bacteria</taxon>
        <taxon>Pseudomonadati</taxon>
        <taxon>Pseudomonadota</taxon>
        <taxon>Gammaproteobacteria</taxon>
        <taxon>Enterobacterales</taxon>
        <taxon>Enterobacteriaceae</taxon>
        <taxon>Escherichia</taxon>
    </lineage>
</organism>
<gene>
    <name evidence="1" type="primary">dcyD</name>
    <name type="ordered locus">ECH74115_2693</name>
</gene>